<keyword id="KW-0614">Plasmid</keyword>
<organism>
    <name type="scientific">Streptomyces lividans</name>
    <dbReference type="NCBI Taxonomy" id="1916"/>
    <lineage>
        <taxon>Bacteria</taxon>
        <taxon>Bacillati</taxon>
        <taxon>Actinomycetota</taxon>
        <taxon>Actinomycetes</taxon>
        <taxon>Kitasatosporales</taxon>
        <taxon>Streptomycetaceae</taxon>
        <taxon>Streptomyces</taxon>
    </lineage>
</organism>
<sequence>MRWRPSSWSAVRLRRGRSSGCPIVVGKMPAEPADLDRDGYPAGRGRASVEGEGGRHADRHGGPQAQELPHDQRPADQEQCGQHCR</sequence>
<geneLocation type="plasmid">
    <name>pIJ101</name>
</geneLocation>
<accession>P22399</accession>
<proteinExistence type="predicted"/>
<dbReference type="EMBL" id="M21778">
    <property type="protein sequence ID" value="AAA88413.1"/>
    <property type="molecule type" value="Genomic_DNA"/>
</dbReference>
<dbReference type="PIR" id="A30924">
    <property type="entry name" value="A30924"/>
</dbReference>
<dbReference type="RefSeq" id="NP_040450.1">
    <property type="nucleotide sequence ID" value="NC_001387.1"/>
</dbReference>
<protein>
    <recommendedName>
        <fullName>Uncharacterized 9.4 kDa protein</fullName>
    </recommendedName>
    <alternativeName>
        <fullName>ORF 85</fullName>
    </alternativeName>
</protein>
<reference key="1">
    <citation type="journal article" date="1988" name="J. Bacteriol.">
        <title>Complete nucleotide sequence of the Streptomyces lividans plasmid pIJ101 and correlation of the sequence with genetic properties.</title>
        <authorList>
            <person name="Kendall K.J."/>
            <person name="Cohen S.N."/>
        </authorList>
    </citation>
    <scope>NUCLEOTIDE SEQUENCE [GENOMIC DNA]</scope>
</reference>
<name>Y9KD_STRLI</name>
<feature type="chain" id="PRO_0000066103" description="Uncharacterized 9.4 kDa protein">
    <location>
        <begin position="1"/>
        <end position="85"/>
    </location>
</feature>
<feature type="region of interest" description="Disordered" evidence="1">
    <location>
        <begin position="1"/>
        <end position="85"/>
    </location>
</feature>
<feature type="compositionally biased region" description="Basic and acidic residues" evidence="1">
    <location>
        <begin position="47"/>
        <end position="61"/>
    </location>
</feature>
<evidence type="ECO:0000256" key="1">
    <source>
        <dbReference type="SAM" id="MobiDB-lite"/>
    </source>
</evidence>